<dbReference type="EMBL" id="AY277635">
    <property type="protein sequence ID" value="AAP32918.1"/>
    <property type="molecule type" value="mRNA"/>
</dbReference>
<dbReference type="RefSeq" id="NP_852040.1">
    <property type="nucleotide sequence ID" value="NM_181375.1"/>
</dbReference>
<dbReference type="SMR" id="Q80W87"/>
<dbReference type="FunCoup" id="Q80W87">
    <property type="interactions" value="109"/>
</dbReference>
<dbReference type="STRING" id="10116.ENSRNOP00000044365"/>
<dbReference type="GlyCosmos" id="Q80W87">
    <property type="glycosylation" value="9 sites, No reported glycans"/>
</dbReference>
<dbReference type="GlyGen" id="Q80W87">
    <property type="glycosylation" value="10 sites"/>
</dbReference>
<dbReference type="iPTMnet" id="Q80W87"/>
<dbReference type="PhosphoSitePlus" id="Q80W87"/>
<dbReference type="PaxDb" id="10116-ENSRNOP00000044365"/>
<dbReference type="UCSC" id="RGD:727947">
    <property type="organism name" value="rat"/>
</dbReference>
<dbReference type="AGR" id="RGD:6494870"/>
<dbReference type="RGD" id="6494870">
    <property type="gene designation" value="Robo4"/>
</dbReference>
<dbReference type="eggNOG" id="KOG4222">
    <property type="taxonomic scope" value="Eukaryota"/>
</dbReference>
<dbReference type="InParanoid" id="Q80W87"/>
<dbReference type="PhylomeDB" id="Q80W87"/>
<dbReference type="PRO" id="PR:Q80W87"/>
<dbReference type="Proteomes" id="UP000002494">
    <property type="component" value="Unplaced"/>
</dbReference>
<dbReference type="GO" id="GO:0009897">
    <property type="term" value="C:external side of plasma membrane"/>
    <property type="evidence" value="ECO:0000266"/>
    <property type="project" value="RGD"/>
</dbReference>
<dbReference type="GO" id="GO:0038023">
    <property type="term" value="F:signaling receptor activity"/>
    <property type="evidence" value="ECO:0000266"/>
    <property type="project" value="RGD"/>
</dbReference>
<dbReference type="GO" id="GO:0001525">
    <property type="term" value="P:angiogenesis"/>
    <property type="evidence" value="ECO:0007669"/>
    <property type="project" value="UniProtKB-KW"/>
</dbReference>
<dbReference type="GO" id="GO:0043534">
    <property type="term" value="P:blood vessel endothelial cell migration"/>
    <property type="evidence" value="ECO:0000266"/>
    <property type="project" value="RGD"/>
</dbReference>
<dbReference type="GO" id="GO:0061028">
    <property type="term" value="P:establishment of endothelial barrier"/>
    <property type="evidence" value="ECO:0000266"/>
    <property type="project" value="RGD"/>
</dbReference>
<dbReference type="GO" id="GO:0043537">
    <property type="term" value="P:negative regulation of blood vessel endothelial cell migration"/>
    <property type="evidence" value="ECO:0000266"/>
    <property type="project" value="RGD"/>
</dbReference>
<dbReference type="CDD" id="cd00063">
    <property type="entry name" value="FN3"/>
    <property type="match status" value="1"/>
</dbReference>
<dbReference type="FunFam" id="2.60.40.10:FF:000840">
    <property type="entry name" value="Roundabout guidance receptor 4"/>
    <property type="match status" value="1"/>
</dbReference>
<dbReference type="FunFam" id="2.60.40.10:FF:000929">
    <property type="entry name" value="Roundabout guidance receptor 4"/>
    <property type="match status" value="1"/>
</dbReference>
<dbReference type="FunFam" id="2.60.40.10:FF:000844">
    <property type="entry name" value="roundabout homolog 4 isoform X1"/>
    <property type="match status" value="1"/>
</dbReference>
<dbReference type="Gene3D" id="2.60.40.10">
    <property type="entry name" value="Immunoglobulins"/>
    <property type="match status" value="4"/>
</dbReference>
<dbReference type="InterPro" id="IPR003961">
    <property type="entry name" value="FN3_dom"/>
</dbReference>
<dbReference type="InterPro" id="IPR036116">
    <property type="entry name" value="FN3_sf"/>
</dbReference>
<dbReference type="InterPro" id="IPR007110">
    <property type="entry name" value="Ig-like_dom"/>
</dbReference>
<dbReference type="InterPro" id="IPR036179">
    <property type="entry name" value="Ig-like_dom_sf"/>
</dbReference>
<dbReference type="InterPro" id="IPR013783">
    <property type="entry name" value="Ig-like_fold"/>
</dbReference>
<dbReference type="InterPro" id="IPR013098">
    <property type="entry name" value="Ig_I-set"/>
</dbReference>
<dbReference type="InterPro" id="IPR003599">
    <property type="entry name" value="Ig_sub"/>
</dbReference>
<dbReference type="InterPro" id="IPR003598">
    <property type="entry name" value="Ig_sub2"/>
</dbReference>
<dbReference type="PANTHER" id="PTHR44170">
    <property type="entry name" value="PROTEIN SIDEKICK"/>
    <property type="match status" value="1"/>
</dbReference>
<dbReference type="PANTHER" id="PTHR44170:SF11">
    <property type="entry name" value="ROUNDABOUT HOMOLOG 4"/>
    <property type="match status" value="1"/>
</dbReference>
<dbReference type="Pfam" id="PF00041">
    <property type="entry name" value="fn3"/>
    <property type="match status" value="1"/>
</dbReference>
<dbReference type="Pfam" id="PF07679">
    <property type="entry name" value="I-set"/>
    <property type="match status" value="1"/>
</dbReference>
<dbReference type="Pfam" id="PF13927">
    <property type="entry name" value="Ig_3"/>
    <property type="match status" value="1"/>
</dbReference>
<dbReference type="SMART" id="SM00060">
    <property type="entry name" value="FN3"/>
    <property type="match status" value="2"/>
</dbReference>
<dbReference type="SMART" id="SM00409">
    <property type="entry name" value="IG"/>
    <property type="match status" value="2"/>
</dbReference>
<dbReference type="SMART" id="SM00408">
    <property type="entry name" value="IGc2"/>
    <property type="match status" value="2"/>
</dbReference>
<dbReference type="SUPFAM" id="SSF49265">
    <property type="entry name" value="Fibronectin type III"/>
    <property type="match status" value="1"/>
</dbReference>
<dbReference type="SUPFAM" id="SSF48726">
    <property type="entry name" value="Immunoglobulin"/>
    <property type="match status" value="2"/>
</dbReference>
<dbReference type="PROSITE" id="PS50853">
    <property type="entry name" value="FN3"/>
    <property type="match status" value="2"/>
</dbReference>
<dbReference type="PROSITE" id="PS50835">
    <property type="entry name" value="IG_LIKE"/>
    <property type="match status" value="2"/>
</dbReference>
<protein>
    <recommendedName>
        <fullName>Roundabout homolog 4</fullName>
    </recommendedName>
</protein>
<reference key="1">
    <citation type="submission" date="2003-04" db="EMBL/GenBank/DDBJ databases">
        <authorList>
            <person name="Roberts K.G."/>
            <person name="Stewart L.M."/>
        </authorList>
    </citation>
    <scope>NUCLEOTIDE SEQUENCE [MRNA]</scope>
    <scope>VARIANT PRO-70</scope>
</reference>
<gene>
    <name type="primary">Robo4</name>
</gene>
<keyword id="KW-0037">Angiogenesis</keyword>
<keyword id="KW-0217">Developmental protein</keyword>
<keyword id="KW-0221">Differentiation</keyword>
<keyword id="KW-1015">Disulfide bond</keyword>
<keyword id="KW-0325">Glycoprotein</keyword>
<keyword id="KW-0393">Immunoglobulin domain</keyword>
<keyword id="KW-0597">Phosphoprotein</keyword>
<keyword id="KW-0675">Receptor</keyword>
<keyword id="KW-1185">Reference proteome</keyword>
<keyword id="KW-0677">Repeat</keyword>
<keyword id="KW-0732">Signal</keyword>
<organism>
    <name type="scientific">Rattus norvegicus</name>
    <name type="common">Rat</name>
    <dbReference type="NCBI Taxonomy" id="10116"/>
    <lineage>
        <taxon>Eukaryota</taxon>
        <taxon>Metazoa</taxon>
        <taxon>Chordata</taxon>
        <taxon>Craniata</taxon>
        <taxon>Vertebrata</taxon>
        <taxon>Euteleostomi</taxon>
        <taxon>Mammalia</taxon>
        <taxon>Eutheria</taxon>
        <taxon>Euarchontoglires</taxon>
        <taxon>Glires</taxon>
        <taxon>Rodentia</taxon>
        <taxon>Myomorpha</taxon>
        <taxon>Muroidea</taxon>
        <taxon>Muridae</taxon>
        <taxon>Murinae</taxon>
        <taxon>Rattus</taxon>
    </lineage>
</organism>
<name>ROBO4_RAT</name>
<evidence type="ECO:0000250" key="1"/>
<evidence type="ECO:0000250" key="2">
    <source>
        <dbReference type="UniProtKB" id="Q8WZ75"/>
    </source>
</evidence>
<evidence type="ECO:0000255" key="3"/>
<evidence type="ECO:0000255" key="4">
    <source>
        <dbReference type="PROSITE-ProRule" id="PRU00114"/>
    </source>
</evidence>
<evidence type="ECO:0000255" key="5">
    <source>
        <dbReference type="PROSITE-ProRule" id="PRU00316"/>
    </source>
</evidence>
<evidence type="ECO:0000256" key="6">
    <source>
        <dbReference type="SAM" id="MobiDB-lite"/>
    </source>
</evidence>
<evidence type="ECO:0000269" key="7">
    <source ref="1"/>
</evidence>
<evidence type="ECO:0000305" key="8"/>
<feature type="signal peptide" evidence="3">
    <location>
        <begin position="1"/>
        <end position="37"/>
    </location>
</feature>
<feature type="chain" id="PRO_0000031042" description="Roundabout homolog 4">
    <location>
        <begin position="38"/>
        <end position="961"/>
    </location>
</feature>
<feature type="domain" description="Ig-like C2-type 1">
    <location>
        <begin position="42"/>
        <end position="142"/>
    </location>
</feature>
<feature type="domain" description="Ig-like C2-type 2">
    <location>
        <begin position="148"/>
        <end position="235"/>
    </location>
</feature>
<feature type="domain" description="Fibronectin type-III 1" evidence="5">
    <location>
        <begin position="259"/>
        <end position="356"/>
    </location>
</feature>
<feature type="domain" description="Fibronectin type-III 2" evidence="5">
    <location>
        <begin position="358"/>
        <end position="453"/>
    </location>
</feature>
<feature type="region of interest" description="Disordered" evidence="6">
    <location>
        <begin position="544"/>
        <end position="563"/>
    </location>
</feature>
<feature type="region of interest" description="Disordered" evidence="6">
    <location>
        <begin position="600"/>
        <end position="634"/>
    </location>
</feature>
<feature type="region of interest" description="Disordered" evidence="6">
    <location>
        <begin position="726"/>
        <end position="810"/>
    </location>
</feature>
<feature type="compositionally biased region" description="Low complexity" evidence="6">
    <location>
        <begin position="544"/>
        <end position="559"/>
    </location>
</feature>
<feature type="compositionally biased region" description="Polar residues" evidence="6">
    <location>
        <begin position="623"/>
        <end position="634"/>
    </location>
</feature>
<feature type="compositionally biased region" description="Low complexity" evidence="6">
    <location>
        <begin position="755"/>
        <end position="769"/>
    </location>
</feature>
<feature type="compositionally biased region" description="Polar residues" evidence="6">
    <location>
        <begin position="770"/>
        <end position="783"/>
    </location>
</feature>
<feature type="compositionally biased region" description="Low complexity" evidence="6">
    <location>
        <begin position="784"/>
        <end position="801"/>
    </location>
</feature>
<feature type="modified residue" description="Phosphoserine" evidence="2">
    <location>
        <position position="823"/>
    </location>
</feature>
<feature type="glycosylation site" description="N-linked (GlcNAc...) asparagine" evidence="3">
    <location>
        <position position="211"/>
    </location>
</feature>
<feature type="glycosylation site" description="N-linked (GlcNAc...) asparagine" evidence="3">
    <location>
        <position position="257"/>
    </location>
</feature>
<feature type="glycosylation site" description="N-linked (GlcNAc...) asparagine" evidence="3">
    <location>
        <position position="371"/>
    </location>
</feature>
<feature type="glycosylation site" description="N-linked (GlcNAc...) asparagine" evidence="3">
    <location>
        <position position="400"/>
    </location>
</feature>
<feature type="glycosylation site" description="N-linked (GlcNAc...) asparagine" evidence="3">
    <location>
        <position position="407"/>
    </location>
</feature>
<feature type="glycosylation site" description="N-linked (GlcNAc...) asparagine" evidence="3">
    <location>
        <position position="691"/>
    </location>
</feature>
<feature type="glycosylation site" description="N-linked (GlcNAc...) asparagine" evidence="3">
    <location>
        <position position="723"/>
    </location>
</feature>
<feature type="glycosylation site" description="N-linked (GlcNAc...) asparagine" evidence="3">
    <location>
        <position position="772"/>
    </location>
</feature>
<feature type="glycosylation site" description="N-linked (GlcNAc...) asparagine" evidence="3">
    <location>
        <position position="793"/>
    </location>
</feature>
<feature type="disulfide bond" evidence="4">
    <location>
        <begin position="63"/>
        <end position="125"/>
    </location>
</feature>
<feature type="disulfide bond" evidence="4">
    <location>
        <begin position="169"/>
        <end position="218"/>
    </location>
</feature>
<feature type="sequence variant" evidence="7">
    <original>L</original>
    <variation>P</variation>
    <location>
        <position position="70"/>
    </location>
</feature>
<proteinExistence type="evidence at transcript level"/>
<accession>Q80W87</accession>
<sequence length="961" mass="102580">MGQGEELRAAVDSGGMGLLGTKCPLPLLLLFIMGGKALDSPPQILVHPQDQLLQGSGPAKMSCRASGQPLPTIRWLLNGQPLSMATPDLHYLQSDGTLLLHRPPTHGRPQDDQNILSAILGVYTCEASNRLGTAVSRGARLSVAVLQEDFRIQPRDTVAVVGESLVLECGPPWGYPKPSVSWWKDGKPLVLQPGKRTVSGDSLMVARAEKNDTGTYMCMATNNAGQRESRAARVSIQESPDHKEHLELLAVRIQLENVTLLNPEPVKGPKPGPAVWLSWKVSGPAAPAQSYTALFRAQRDPRDQGSPWTEVLLDGLLNAKLGGLRWGQDYEFKVRPSSGRARGPDSNVLLLRLPEQVPSAPPQEVTLRPGNGSVFVSWAPPPAENHNGFIRGYQVWSLGNASLPAANWTVVGEQTQLEIAARMPGSYCVQVAAVTGAGAGEPSIPVCLLLEQAMEQSARDPSKHVSWTLEQLRATLKRPEVIASGAVLLWLLLLGIAVCIYRRRKAGVHLGPGLYRYTSEDAILKHRMDHSDSPWLADTWRSTSGSRDLSSSSSLSSRLGVDPRDPLDGRRSLISWDPRSPGVPLLPDTSTFYGSLIAEQTSSPPVRPSPQTPAARRLPPKLTGTSSPWASSDSLCSRRGLCSPRMSLAPAEAWKAKKKQELHQANSSPLLQGSHPMEIWAWELGSRASKNLSQSPGPNTCSPREAPGAVVAWRALGPQLHRNSSELAARPLPPTPLSLRGAPSHDPQSQCVEKLQAPSSDPLPAAPLSVLNSSRPSSPQASFLSVPSPGSSNLSSSSLSSLEEEDQDSVLTPEEVALCLELSDGEETPTNSVSPMPRAPSPPATYGYISIPTSSGLADMGRAGGGVGSEVGNLLCPPRLCPTPTPSEGSLANGWGSASEDNVPSARASLVSSSDGSFLADAHFARALAVAVDSFGFSLEPREADCVFTGMWARPPPLEWT</sequence>
<comment type="function">
    <text evidence="1 2">Receptor for Slit proteins, at least for SLIT2, and seems to be involved in angiogenesis and vascular patterning. May mediate the inhibition of primary endothelial cell migration by Slit proteins (By similarity). Involved in the maintenance of endothelial barrier organization and function (By similarity).</text>
</comment>
<comment type="subunit">
    <text evidence="1">Interacts with SLIT2 and ENAH.</text>
</comment>
<comment type="similarity">
    <text evidence="8">Belongs to the immunoglobulin superfamily. ROBO family.</text>
</comment>